<organism>
    <name type="scientific">Leptospira interrogans serogroup Icterohaemorrhagiae serovar copenhageni (strain Fiocruz L1-130)</name>
    <dbReference type="NCBI Taxonomy" id="267671"/>
    <lineage>
        <taxon>Bacteria</taxon>
        <taxon>Pseudomonadati</taxon>
        <taxon>Spirochaetota</taxon>
        <taxon>Spirochaetia</taxon>
        <taxon>Leptospirales</taxon>
        <taxon>Leptospiraceae</taxon>
        <taxon>Leptospira</taxon>
    </lineage>
</organism>
<protein>
    <recommendedName>
        <fullName evidence="1">Succinate--CoA ligase [ADP-forming] subunit beta</fullName>
        <ecNumber evidence="1">6.2.1.5</ecNumber>
    </recommendedName>
    <alternativeName>
        <fullName evidence="1">Succinyl-CoA synthetase subunit beta</fullName>
        <shortName evidence="1">SCS-beta</shortName>
    </alternativeName>
</protein>
<keyword id="KW-0067">ATP-binding</keyword>
<keyword id="KW-0436">Ligase</keyword>
<keyword id="KW-0460">Magnesium</keyword>
<keyword id="KW-0479">Metal-binding</keyword>
<keyword id="KW-0547">Nucleotide-binding</keyword>
<keyword id="KW-0816">Tricarboxylic acid cycle</keyword>
<proteinExistence type="inferred from homology"/>
<dbReference type="EC" id="6.2.1.5" evidence="1"/>
<dbReference type="EMBL" id="AE016823">
    <property type="protein sequence ID" value="AAS71134.1"/>
    <property type="molecule type" value="Genomic_DNA"/>
</dbReference>
<dbReference type="RefSeq" id="WP_000690686.1">
    <property type="nucleotide sequence ID" value="NC_005823.1"/>
</dbReference>
<dbReference type="SMR" id="Q72PA2"/>
<dbReference type="GeneID" id="61142451"/>
<dbReference type="KEGG" id="lic:LIC_12573"/>
<dbReference type="HOGENOM" id="CLU_037430_0_2_12"/>
<dbReference type="UniPathway" id="UPA00223">
    <property type="reaction ID" value="UER00999"/>
</dbReference>
<dbReference type="Proteomes" id="UP000007037">
    <property type="component" value="Chromosome I"/>
</dbReference>
<dbReference type="GO" id="GO:0005829">
    <property type="term" value="C:cytosol"/>
    <property type="evidence" value="ECO:0007669"/>
    <property type="project" value="TreeGrafter"/>
</dbReference>
<dbReference type="GO" id="GO:0042709">
    <property type="term" value="C:succinate-CoA ligase complex"/>
    <property type="evidence" value="ECO:0007669"/>
    <property type="project" value="TreeGrafter"/>
</dbReference>
<dbReference type="GO" id="GO:0005524">
    <property type="term" value="F:ATP binding"/>
    <property type="evidence" value="ECO:0007669"/>
    <property type="project" value="UniProtKB-UniRule"/>
</dbReference>
<dbReference type="GO" id="GO:0000287">
    <property type="term" value="F:magnesium ion binding"/>
    <property type="evidence" value="ECO:0007669"/>
    <property type="project" value="UniProtKB-UniRule"/>
</dbReference>
<dbReference type="GO" id="GO:0004775">
    <property type="term" value="F:succinate-CoA ligase (ADP-forming) activity"/>
    <property type="evidence" value="ECO:0007669"/>
    <property type="project" value="UniProtKB-UniRule"/>
</dbReference>
<dbReference type="GO" id="GO:0004776">
    <property type="term" value="F:succinate-CoA ligase (GDP-forming) activity"/>
    <property type="evidence" value="ECO:0007669"/>
    <property type="project" value="RHEA"/>
</dbReference>
<dbReference type="GO" id="GO:0006104">
    <property type="term" value="P:succinyl-CoA metabolic process"/>
    <property type="evidence" value="ECO:0007669"/>
    <property type="project" value="TreeGrafter"/>
</dbReference>
<dbReference type="GO" id="GO:0006099">
    <property type="term" value="P:tricarboxylic acid cycle"/>
    <property type="evidence" value="ECO:0007669"/>
    <property type="project" value="UniProtKB-UniRule"/>
</dbReference>
<dbReference type="FunFam" id="3.30.1490.20:FF:000002">
    <property type="entry name" value="Succinate--CoA ligase [ADP-forming] subunit beta"/>
    <property type="match status" value="1"/>
</dbReference>
<dbReference type="FunFam" id="3.30.470.20:FF:000002">
    <property type="entry name" value="Succinate--CoA ligase [ADP-forming] subunit beta"/>
    <property type="match status" value="1"/>
</dbReference>
<dbReference type="FunFam" id="3.40.50.261:FF:000001">
    <property type="entry name" value="Succinate--CoA ligase [ADP-forming] subunit beta"/>
    <property type="match status" value="1"/>
</dbReference>
<dbReference type="Gene3D" id="3.30.1490.20">
    <property type="entry name" value="ATP-grasp fold, A domain"/>
    <property type="match status" value="1"/>
</dbReference>
<dbReference type="Gene3D" id="3.30.470.20">
    <property type="entry name" value="ATP-grasp fold, B domain"/>
    <property type="match status" value="1"/>
</dbReference>
<dbReference type="Gene3D" id="3.40.50.261">
    <property type="entry name" value="Succinyl-CoA synthetase domains"/>
    <property type="match status" value="1"/>
</dbReference>
<dbReference type="HAMAP" id="MF_00558">
    <property type="entry name" value="Succ_CoA_beta"/>
    <property type="match status" value="1"/>
</dbReference>
<dbReference type="InterPro" id="IPR011761">
    <property type="entry name" value="ATP-grasp"/>
</dbReference>
<dbReference type="InterPro" id="IPR013650">
    <property type="entry name" value="ATP-grasp_succ-CoA_synth-type"/>
</dbReference>
<dbReference type="InterPro" id="IPR013815">
    <property type="entry name" value="ATP_grasp_subdomain_1"/>
</dbReference>
<dbReference type="InterPro" id="IPR017866">
    <property type="entry name" value="Succ-CoA_synthase_bsu_CS"/>
</dbReference>
<dbReference type="InterPro" id="IPR005811">
    <property type="entry name" value="SUCC_ACL_C"/>
</dbReference>
<dbReference type="InterPro" id="IPR005809">
    <property type="entry name" value="Succ_CoA_ligase-like_bsu"/>
</dbReference>
<dbReference type="InterPro" id="IPR016102">
    <property type="entry name" value="Succinyl-CoA_synth-like"/>
</dbReference>
<dbReference type="NCBIfam" id="NF001913">
    <property type="entry name" value="PRK00696.1"/>
    <property type="match status" value="1"/>
</dbReference>
<dbReference type="NCBIfam" id="TIGR01016">
    <property type="entry name" value="sucCoAbeta"/>
    <property type="match status" value="1"/>
</dbReference>
<dbReference type="PANTHER" id="PTHR11815:SF10">
    <property type="entry name" value="SUCCINATE--COA LIGASE [GDP-FORMING] SUBUNIT BETA, MITOCHONDRIAL"/>
    <property type="match status" value="1"/>
</dbReference>
<dbReference type="PANTHER" id="PTHR11815">
    <property type="entry name" value="SUCCINYL-COA SYNTHETASE BETA CHAIN"/>
    <property type="match status" value="1"/>
</dbReference>
<dbReference type="Pfam" id="PF08442">
    <property type="entry name" value="ATP-grasp_2"/>
    <property type="match status" value="1"/>
</dbReference>
<dbReference type="Pfam" id="PF00549">
    <property type="entry name" value="Ligase_CoA"/>
    <property type="match status" value="1"/>
</dbReference>
<dbReference type="PIRSF" id="PIRSF001554">
    <property type="entry name" value="SucCS_beta"/>
    <property type="match status" value="1"/>
</dbReference>
<dbReference type="SUPFAM" id="SSF56059">
    <property type="entry name" value="Glutathione synthetase ATP-binding domain-like"/>
    <property type="match status" value="1"/>
</dbReference>
<dbReference type="SUPFAM" id="SSF52210">
    <property type="entry name" value="Succinyl-CoA synthetase domains"/>
    <property type="match status" value="1"/>
</dbReference>
<dbReference type="PROSITE" id="PS50975">
    <property type="entry name" value="ATP_GRASP"/>
    <property type="match status" value="1"/>
</dbReference>
<dbReference type="PROSITE" id="PS01217">
    <property type="entry name" value="SUCCINYL_COA_LIG_3"/>
    <property type="match status" value="1"/>
</dbReference>
<gene>
    <name evidence="1" type="primary">sucC</name>
    <name type="ordered locus">LIC_12573</name>
</gene>
<accession>Q72PA2</accession>
<evidence type="ECO:0000255" key="1">
    <source>
        <dbReference type="HAMAP-Rule" id="MF_00558"/>
    </source>
</evidence>
<reference key="1">
    <citation type="journal article" date="2004" name="J. Bacteriol.">
        <title>Comparative genomics of two Leptospira interrogans serovars reveals novel insights into physiology and pathogenesis.</title>
        <authorList>
            <person name="Nascimento A.L.T.O."/>
            <person name="Ko A.I."/>
            <person name="Martins E.A.L."/>
            <person name="Monteiro-Vitorello C.B."/>
            <person name="Ho P.L."/>
            <person name="Haake D.A."/>
            <person name="Verjovski-Almeida S."/>
            <person name="Hartskeerl R.A."/>
            <person name="Marques M.V."/>
            <person name="Oliveira M.C."/>
            <person name="Menck C.F.M."/>
            <person name="Leite L.C.C."/>
            <person name="Carrer H."/>
            <person name="Coutinho L.L."/>
            <person name="Degrave W.M."/>
            <person name="Dellagostin O.A."/>
            <person name="El-Dorry H."/>
            <person name="Ferro E.S."/>
            <person name="Ferro M.I.T."/>
            <person name="Furlan L.R."/>
            <person name="Gamberini M."/>
            <person name="Giglioti E.A."/>
            <person name="Goes-Neto A."/>
            <person name="Goldman G.H."/>
            <person name="Goldman M.H.S."/>
            <person name="Harakava R."/>
            <person name="Jeronimo S.M.B."/>
            <person name="Junqueira-de-Azevedo I.L.M."/>
            <person name="Kimura E.T."/>
            <person name="Kuramae E.E."/>
            <person name="Lemos E.G.M."/>
            <person name="Lemos M.V.F."/>
            <person name="Marino C.L."/>
            <person name="Nunes L.R."/>
            <person name="de Oliveira R.C."/>
            <person name="Pereira G.G."/>
            <person name="Reis M.S."/>
            <person name="Schriefer A."/>
            <person name="Siqueira W.J."/>
            <person name="Sommer P."/>
            <person name="Tsai S.M."/>
            <person name="Simpson A.J.G."/>
            <person name="Ferro J.A."/>
            <person name="Camargo L.E.A."/>
            <person name="Kitajima J.P."/>
            <person name="Setubal J.C."/>
            <person name="Van Sluys M.A."/>
        </authorList>
    </citation>
    <scope>NUCLEOTIDE SEQUENCE [LARGE SCALE GENOMIC DNA]</scope>
    <source>
        <strain>Fiocruz L1-130</strain>
    </source>
</reference>
<sequence length="390" mass="41890">MKIHEYQAKEILRRHKANVPFGVVIDKKENASKAHDEVTSKTGGSVVVVKAQIHAGGRGKGGGVKVTKTKEDAIAAVDKILGMQLITPQTGPEGKKVLKVYLEQGIDIAKEYYLSILLDRSIRKTIIMASTEGGMEIEEVAETHPEKILKIAIDPGIGLQVNQARQLAFELGLPAESHKSFQSLLAAIYEAYIKEDASLLEINPLILTKQNEIIAGDCKIDLDENALYRHADNAAFRDITEEDPLEVQASEFNLNYVKLDGNIGCMVNGAGLAMATMDIVKLAGAEPANFLDVGGGANKTTVTNGFKIILGDPNVKGIFVNIFGGIVRCDMVAEGIIEAAKAVDLKVPLVVRLQGTNSELGREVLNKSGLKITGVDDLREAASTIAKLIG</sequence>
<feature type="chain" id="PRO_0000102836" description="Succinate--CoA ligase [ADP-forming] subunit beta">
    <location>
        <begin position="1"/>
        <end position="390"/>
    </location>
</feature>
<feature type="domain" description="ATP-grasp" evidence="1">
    <location>
        <begin position="9"/>
        <end position="248"/>
    </location>
</feature>
<feature type="binding site" evidence="1">
    <location>
        <position position="50"/>
    </location>
    <ligand>
        <name>ATP</name>
        <dbReference type="ChEBI" id="CHEBI:30616"/>
    </ligand>
</feature>
<feature type="binding site" evidence="1">
    <location>
        <begin position="57"/>
        <end position="59"/>
    </location>
    <ligand>
        <name>ATP</name>
        <dbReference type="ChEBI" id="CHEBI:30616"/>
    </ligand>
</feature>
<feature type="binding site" evidence="1">
    <location>
        <position position="103"/>
    </location>
    <ligand>
        <name>ATP</name>
        <dbReference type="ChEBI" id="CHEBI:30616"/>
    </ligand>
</feature>
<feature type="binding site" evidence="1">
    <location>
        <position position="106"/>
    </location>
    <ligand>
        <name>ATP</name>
        <dbReference type="ChEBI" id="CHEBI:30616"/>
    </ligand>
</feature>
<feature type="binding site" evidence="1">
    <location>
        <position position="111"/>
    </location>
    <ligand>
        <name>ATP</name>
        <dbReference type="ChEBI" id="CHEBI:30616"/>
    </ligand>
</feature>
<feature type="binding site" evidence="1">
    <location>
        <position position="203"/>
    </location>
    <ligand>
        <name>Mg(2+)</name>
        <dbReference type="ChEBI" id="CHEBI:18420"/>
    </ligand>
</feature>
<feature type="binding site" evidence="1">
    <location>
        <position position="217"/>
    </location>
    <ligand>
        <name>Mg(2+)</name>
        <dbReference type="ChEBI" id="CHEBI:18420"/>
    </ligand>
</feature>
<feature type="binding site" evidence="1">
    <location>
        <position position="268"/>
    </location>
    <ligand>
        <name>substrate</name>
        <note>ligand shared with subunit alpha</note>
    </ligand>
</feature>
<feature type="binding site" evidence="1">
    <location>
        <begin position="325"/>
        <end position="327"/>
    </location>
    <ligand>
        <name>substrate</name>
        <note>ligand shared with subunit alpha</note>
    </ligand>
</feature>
<comment type="function">
    <text evidence="1">Succinyl-CoA synthetase functions in the citric acid cycle (TCA), coupling the hydrolysis of succinyl-CoA to the synthesis of either ATP or GTP and thus represents the only step of substrate-level phosphorylation in the TCA. The beta subunit provides nucleotide specificity of the enzyme and binds the substrate succinate, while the binding sites for coenzyme A and phosphate are found in the alpha subunit.</text>
</comment>
<comment type="catalytic activity">
    <reaction evidence="1">
        <text>succinate + ATP + CoA = succinyl-CoA + ADP + phosphate</text>
        <dbReference type="Rhea" id="RHEA:17661"/>
        <dbReference type="ChEBI" id="CHEBI:30031"/>
        <dbReference type="ChEBI" id="CHEBI:30616"/>
        <dbReference type="ChEBI" id="CHEBI:43474"/>
        <dbReference type="ChEBI" id="CHEBI:57287"/>
        <dbReference type="ChEBI" id="CHEBI:57292"/>
        <dbReference type="ChEBI" id="CHEBI:456216"/>
        <dbReference type="EC" id="6.2.1.5"/>
    </reaction>
    <physiologicalReaction direction="right-to-left" evidence="1">
        <dbReference type="Rhea" id="RHEA:17663"/>
    </physiologicalReaction>
</comment>
<comment type="catalytic activity">
    <reaction evidence="1">
        <text>GTP + succinate + CoA = succinyl-CoA + GDP + phosphate</text>
        <dbReference type="Rhea" id="RHEA:22120"/>
        <dbReference type="ChEBI" id="CHEBI:30031"/>
        <dbReference type="ChEBI" id="CHEBI:37565"/>
        <dbReference type="ChEBI" id="CHEBI:43474"/>
        <dbReference type="ChEBI" id="CHEBI:57287"/>
        <dbReference type="ChEBI" id="CHEBI:57292"/>
        <dbReference type="ChEBI" id="CHEBI:58189"/>
    </reaction>
    <physiologicalReaction direction="right-to-left" evidence="1">
        <dbReference type="Rhea" id="RHEA:22122"/>
    </physiologicalReaction>
</comment>
<comment type="cofactor">
    <cofactor evidence="1">
        <name>Mg(2+)</name>
        <dbReference type="ChEBI" id="CHEBI:18420"/>
    </cofactor>
    <text evidence="1">Binds 1 Mg(2+) ion per subunit.</text>
</comment>
<comment type="pathway">
    <text evidence="1">Carbohydrate metabolism; tricarboxylic acid cycle; succinate from succinyl-CoA (ligase route): step 1/1.</text>
</comment>
<comment type="subunit">
    <text evidence="1">Heterotetramer of two alpha and two beta subunits.</text>
</comment>
<comment type="similarity">
    <text evidence="1">Belongs to the succinate/malate CoA ligase beta subunit family.</text>
</comment>
<name>SUCC_LEPIC</name>